<proteinExistence type="inferred from homology"/>
<evidence type="ECO:0000255" key="1">
    <source>
        <dbReference type="HAMAP-Rule" id="MF_00454"/>
    </source>
</evidence>
<feature type="chain" id="PRO_0000252873" description="Fluoride-specific ion channel FluC">
    <location>
        <begin position="1"/>
        <end position="130"/>
    </location>
</feature>
<feature type="transmembrane region" description="Helical" evidence="1">
    <location>
        <begin position="1"/>
        <end position="21"/>
    </location>
</feature>
<feature type="transmembrane region" description="Helical" evidence="1">
    <location>
        <begin position="36"/>
        <end position="56"/>
    </location>
</feature>
<feature type="transmembrane region" description="Helical" evidence="1">
    <location>
        <begin position="65"/>
        <end position="85"/>
    </location>
</feature>
<feature type="transmembrane region" description="Helical" evidence="1">
    <location>
        <begin position="103"/>
        <end position="123"/>
    </location>
</feature>
<feature type="binding site" evidence="1">
    <location>
        <position position="75"/>
    </location>
    <ligand>
        <name>Na(+)</name>
        <dbReference type="ChEBI" id="CHEBI:29101"/>
        <note>structural</note>
    </ligand>
</feature>
<feature type="binding site" evidence="1">
    <location>
        <position position="78"/>
    </location>
    <ligand>
        <name>Na(+)</name>
        <dbReference type="ChEBI" id="CHEBI:29101"/>
        <note>structural</note>
    </ligand>
</feature>
<name>FLUC_DEHM1</name>
<reference key="1">
    <citation type="journal article" date="2005" name="Science">
        <title>Genome sequence of the PCE-dechlorinating bacterium Dehalococcoides ethenogenes.</title>
        <authorList>
            <person name="Seshadri R."/>
            <person name="Adrian L."/>
            <person name="Fouts D.E."/>
            <person name="Eisen J.A."/>
            <person name="Phillippy A.M."/>
            <person name="Methe B.A."/>
            <person name="Ward N.L."/>
            <person name="Nelson W.C."/>
            <person name="DeBoy R.T."/>
            <person name="Khouri H.M."/>
            <person name="Kolonay J.F."/>
            <person name="Dodson R.J."/>
            <person name="Daugherty S.C."/>
            <person name="Brinkac L.M."/>
            <person name="Sullivan S.A."/>
            <person name="Madupu R."/>
            <person name="Nelson K.E."/>
            <person name="Kang K.H."/>
            <person name="Impraim M."/>
            <person name="Tran K."/>
            <person name="Robinson J.M."/>
            <person name="Forberger H.A."/>
            <person name="Fraser C.M."/>
            <person name="Zinder S.H."/>
            <person name="Heidelberg J.F."/>
        </authorList>
    </citation>
    <scope>NUCLEOTIDE SEQUENCE [LARGE SCALE GENOMIC DNA]</scope>
    <source>
        <strain>ATCC BAA-2266 / KCTC 15142 / 195</strain>
    </source>
</reference>
<sequence>MGEILLLAAGGALGAVSRYGLNNLTVKLLGDSFPYGTLIVNCLGCFVLGFLMQWGFSSDSHNTHLKLMLTAGFLGAFTTFSTFSYETLDCFKNGDYFNGFSNILANVLLGLLMVFIGAYLGSLLKQNSGT</sequence>
<protein>
    <recommendedName>
        <fullName evidence="1">Fluoride-specific ion channel FluC</fullName>
    </recommendedName>
</protein>
<gene>
    <name evidence="1" type="primary">fluC</name>
    <name evidence="1" type="synonym">crcB</name>
    <name type="ordered locus">DET1498</name>
</gene>
<keyword id="KW-1003">Cell membrane</keyword>
<keyword id="KW-0407">Ion channel</keyword>
<keyword id="KW-0406">Ion transport</keyword>
<keyword id="KW-0472">Membrane</keyword>
<keyword id="KW-0479">Metal-binding</keyword>
<keyword id="KW-0915">Sodium</keyword>
<keyword id="KW-0812">Transmembrane</keyword>
<keyword id="KW-1133">Transmembrane helix</keyword>
<keyword id="KW-0813">Transport</keyword>
<comment type="function">
    <text evidence="1">Fluoride-specific ion channel. Important for reducing fluoride concentration in the cell, thus reducing its toxicity.</text>
</comment>
<comment type="catalytic activity">
    <reaction evidence="1">
        <text>fluoride(in) = fluoride(out)</text>
        <dbReference type="Rhea" id="RHEA:76159"/>
        <dbReference type="ChEBI" id="CHEBI:17051"/>
    </reaction>
    <physiologicalReaction direction="left-to-right" evidence="1">
        <dbReference type="Rhea" id="RHEA:76160"/>
    </physiologicalReaction>
</comment>
<comment type="activity regulation">
    <text evidence="1">Na(+) is not transported, but it plays an essential structural role and its presence is essential for fluoride channel function.</text>
</comment>
<comment type="subcellular location">
    <subcellularLocation>
        <location evidence="1">Cell membrane</location>
        <topology evidence="1">Multi-pass membrane protein</topology>
    </subcellularLocation>
</comment>
<comment type="similarity">
    <text evidence="1">Belongs to the fluoride channel Fluc/FEX (TC 1.A.43) family.</text>
</comment>
<dbReference type="EMBL" id="CP000027">
    <property type="protein sequence ID" value="AAW39307.1"/>
    <property type="molecule type" value="Genomic_DNA"/>
</dbReference>
<dbReference type="RefSeq" id="WP_010937175.1">
    <property type="nucleotide sequence ID" value="NC_002936.3"/>
</dbReference>
<dbReference type="SMR" id="Q3Z6F1"/>
<dbReference type="FunCoup" id="Q3Z6F1">
    <property type="interactions" value="159"/>
</dbReference>
<dbReference type="STRING" id="243164.DET1498"/>
<dbReference type="GeneID" id="3229265"/>
<dbReference type="KEGG" id="det:DET1498"/>
<dbReference type="eggNOG" id="COG0239">
    <property type="taxonomic scope" value="Bacteria"/>
</dbReference>
<dbReference type="HOGENOM" id="CLU_114342_3_0_0"/>
<dbReference type="InParanoid" id="Q3Z6F1"/>
<dbReference type="Proteomes" id="UP000008289">
    <property type="component" value="Chromosome"/>
</dbReference>
<dbReference type="GO" id="GO:0005886">
    <property type="term" value="C:plasma membrane"/>
    <property type="evidence" value="ECO:0007669"/>
    <property type="project" value="UniProtKB-SubCell"/>
</dbReference>
<dbReference type="GO" id="GO:0062054">
    <property type="term" value="F:fluoride channel activity"/>
    <property type="evidence" value="ECO:0007669"/>
    <property type="project" value="UniProtKB-UniRule"/>
</dbReference>
<dbReference type="GO" id="GO:0046872">
    <property type="term" value="F:metal ion binding"/>
    <property type="evidence" value="ECO:0007669"/>
    <property type="project" value="UniProtKB-KW"/>
</dbReference>
<dbReference type="GO" id="GO:0140114">
    <property type="term" value="P:cellular detoxification of fluoride"/>
    <property type="evidence" value="ECO:0007669"/>
    <property type="project" value="UniProtKB-UniRule"/>
</dbReference>
<dbReference type="HAMAP" id="MF_00454">
    <property type="entry name" value="FluC"/>
    <property type="match status" value="1"/>
</dbReference>
<dbReference type="InterPro" id="IPR003691">
    <property type="entry name" value="FluC"/>
</dbReference>
<dbReference type="NCBIfam" id="TIGR00494">
    <property type="entry name" value="crcB"/>
    <property type="match status" value="1"/>
</dbReference>
<dbReference type="PANTHER" id="PTHR28259">
    <property type="entry name" value="FLUORIDE EXPORT PROTEIN 1-RELATED"/>
    <property type="match status" value="1"/>
</dbReference>
<dbReference type="PANTHER" id="PTHR28259:SF1">
    <property type="entry name" value="FLUORIDE EXPORT PROTEIN 1-RELATED"/>
    <property type="match status" value="1"/>
</dbReference>
<dbReference type="Pfam" id="PF02537">
    <property type="entry name" value="CRCB"/>
    <property type="match status" value="1"/>
</dbReference>
<accession>Q3Z6F1</accession>
<organism>
    <name type="scientific">Dehalococcoides mccartyi (strain ATCC BAA-2266 / KCTC 15142 / 195)</name>
    <name type="common">Dehalococcoides ethenogenes (strain 195)</name>
    <dbReference type="NCBI Taxonomy" id="243164"/>
    <lineage>
        <taxon>Bacteria</taxon>
        <taxon>Bacillati</taxon>
        <taxon>Chloroflexota</taxon>
        <taxon>Dehalococcoidia</taxon>
        <taxon>Dehalococcoidales</taxon>
        <taxon>Dehalococcoidaceae</taxon>
        <taxon>Dehalococcoides</taxon>
    </lineage>
</organism>